<evidence type="ECO:0000250" key="1"/>
<evidence type="ECO:0000255" key="2"/>
<evidence type="ECO:0000305" key="3"/>
<sequence length="674" mass="74689">MPPPAEEFAVDDLDEFESRLDSFLNRFHADDLRRILLPDPDGKLHFPLVIDFAELLEFDPEVAHQLYDYPKDVLELFDAAAQRALDKFDAAARRADKRKAGDEPMEKKFVHVRVNTSGSPLECPEASPSIGKVRVKHRGTLLTLKGTVIRSGGVKMIEGERKYQCRKCKCRFTVHPELEAGNRITLPASCKSKSAKGCGGANFQLIEDSITCHDYQEIKIQENIQLLGVGSIPRSMPIILMDDLVDIVKAGDDVVVTGRLSAKWSPDIKDVRSNLDPMLIANFVRRTNELKSDLDIPVEIINKFEEFWAASRATPLKGRNSILKGICPQIYGLFTVKLAVALTLIGGVQHVDASGTKVRGEPHMLLVGDPGTGKSQFLKFAAKLSNRSVITTGLGSTSAGLTVTAVKDGGEWMLEAGALVLADGGLCCIDEFDSMREHDRTTIHEAMEQQTISIAKAGLVTTLNTRTTVFGATNPKGQYDPNESLSVNTTLSGPLLSRFDIVLVLLDTKNKKWDKIVSSHILAENTEEKKGKTSDPEVMWTLSMLRRYIHYVKQHFKPVLTKEAERVISSYYQRQRQSGTRNAARTTVRMLESLIRLAQAHARLMFRNDVTKLDAIAAILCIESSMTTSAIVDTAGNALHSNFTENPDQECILKCDSIAYLSKNIKYLTDEISN</sequence>
<gene>
    <name type="primary">MCM9</name>
    <name type="ORF">OsI_22179</name>
</gene>
<organism>
    <name type="scientific">Oryza sativa subsp. indica</name>
    <name type="common">Rice</name>
    <dbReference type="NCBI Taxonomy" id="39946"/>
    <lineage>
        <taxon>Eukaryota</taxon>
        <taxon>Viridiplantae</taxon>
        <taxon>Streptophyta</taxon>
        <taxon>Embryophyta</taxon>
        <taxon>Tracheophyta</taxon>
        <taxon>Spermatophyta</taxon>
        <taxon>Magnoliopsida</taxon>
        <taxon>Liliopsida</taxon>
        <taxon>Poales</taxon>
        <taxon>Poaceae</taxon>
        <taxon>BOP clade</taxon>
        <taxon>Oryzoideae</taxon>
        <taxon>Oryzeae</taxon>
        <taxon>Oryzinae</taxon>
        <taxon>Oryza</taxon>
        <taxon>Oryza sativa</taxon>
    </lineage>
</organism>
<feature type="chain" id="PRO_0000426006" description="Probable DNA helicase MCM9">
    <location>
        <begin position="1"/>
        <end position="674"/>
    </location>
</feature>
<feature type="domain" description="MCM">
    <location>
        <begin position="318"/>
        <end position="521"/>
    </location>
</feature>
<feature type="zinc finger region" description="C4-type" evidence="2">
    <location>
        <begin position="165"/>
        <end position="198"/>
    </location>
</feature>
<feature type="short sequence motif" description="Arginine finger">
    <location>
        <begin position="497"/>
        <end position="500"/>
    </location>
</feature>
<feature type="binding site" evidence="1">
    <location>
        <begin position="368"/>
        <end position="375"/>
    </location>
    <ligand>
        <name>ATP</name>
        <dbReference type="ChEBI" id="CHEBI:30616"/>
    </ligand>
</feature>
<reference key="1">
    <citation type="journal article" date="2005" name="PLoS Biol.">
        <title>The genomes of Oryza sativa: a history of duplications.</title>
        <authorList>
            <person name="Yu J."/>
            <person name="Wang J."/>
            <person name="Lin W."/>
            <person name="Li S."/>
            <person name="Li H."/>
            <person name="Zhou J."/>
            <person name="Ni P."/>
            <person name="Dong W."/>
            <person name="Hu S."/>
            <person name="Zeng C."/>
            <person name="Zhang J."/>
            <person name="Zhang Y."/>
            <person name="Li R."/>
            <person name="Xu Z."/>
            <person name="Li S."/>
            <person name="Li X."/>
            <person name="Zheng H."/>
            <person name="Cong L."/>
            <person name="Lin L."/>
            <person name="Yin J."/>
            <person name="Geng J."/>
            <person name="Li G."/>
            <person name="Shi J."/>
            <person name="Liu J."/>
            <person name="Lv H."/>
            <person name="Li J."/>
            <person name="Wang J."/>
            <person name="Deng Y."/>
            <person name="Ran L."/>
            <person name="Shi X."/>
            <person name="Wang X."/>
            <person name="Wu Q."/>
            <person name="Li C."/>
            <person name="Ren X."/>
            <person name="Wang J."/>
            <person name="Wang X."/>
            <person name="Li D."/>
            <person name="Liu D."/>
            <person name="Zhang X."/>
            <person name="Ji Z."/>
            <person name="Zhao W."/>
            <person name="Sun Y."/>
            <person name="Zhang Z."/>
            <person name="Bao J."/>
            <person name="Han Y."/>
            <person name="Dong L."/>
            <person name="Ji J."/>
            <person name="Chen P."/>
            <person name="Wu S."/>
            <person name="Liu J."/>
            <person name="Xiao Y."/>
            <person name="Bu D."/>
            <person name="Tan J."/>
            <person name="Yang L."/>
            <person name="Ye C."/>
            <person name="Zhang J."/>
            <person name="Xu J."/>
            <person name="Zhou Y."/>
            <person name="Yu Y."/>
            <person name="Zhang B."/>
            <person name="Zhuang S."/>
            <person name="Wei H."/>
            <person name="Liu B."/>
            <person name="Lei M."/>
            <person name="Yu H."/>
            <person name="Li Y."/>
            <person name="Xu H."/>
            <person name="Wei S."/>
            <person name="He X."/>
            <person name="Fang L."/>
            <person name="Zhang Z."/>
            <person name="Zhang Y."/>
            <person name="Huang X."/>
            <person name="Su Z."/>
            <person name="Tong W."/>
            <person name="Li J."/>
            <person name="Tong Z."/>
            <person name="Li S."/>
            <person name="Ye J."/>
            <person name="Wang L."/>
            <person name="Fang L."/>
            <person name="Lei T."/>
            <person name="Chen C.-S."/>
            <person name="Chen H.-C."/>
            <person name="Xu Z."/>
            <person name="Li H."/>
            <person name="Huang H."/>
            <person name="Zhang F."/>
            <person name="Xu H."/>
            <person name="Li N."/>
            <person name="Zhao C."/>
            <person name="Li S."/>
            <person name="Dong L."/>
            <person name="Huang Y."/>
            <person name="Li L."/>
            <person name="Xi Y."/>
            <person name="Qi Q."/>
            <person name="Li W."/>
            <person name="Zhang B."/>
            <person name="Hu W."/>
            <person name="Zhang Y."/>
            <person name="Tian X."/>
            <person name="Jiao Y."/>
            <person name="Liang X."/>
            <person name="Jin J."/>
            <person name="Gao L."/>
            <person name="Zheng W."/>
            <person name="Hao B."/>
            <person name="Liu S.-M."/>
            <person name="Wang W."/>
            <person name="Yuan L."/>
            <person name="Cao M."/>
            <person name="McDermott J."/>
            <person name="Samudrala R."/>
            <person name="Wang J."/>
            <person name="Wong G.K.-S."/>
            <person name="Yang H."/>
        </authorList>
    </citation>
    <scope>NUCLEOTIDE SEQUENCE [LARGE SCALE GENOMIC DNA]</scope>
    <source>
        <strain>cv. 93-11</strain>
    </source>
</reference>
<dbReference type="EC" id="3.6.4.12"/>
<dbReference type="EMBL" id="CM000131">
    <property type="protein sequence ID" value="EEC80238.1"/>
    <property type="molecule type" value="Genomic_DNA"/>
</dbReference>
<dbReference type="SMR" id="B8B406"/>
<dbReference type="STRING" id="39946.B8B406"/>
<dbReference type="EnsemblPlants" id="BGIOSGA021655-TA">
    <property type="protein sequence ID" value="BGIOSGA021655-PA"/>
    <property type="gene ID" value="BGIOSGA021655"/>
</dbReference>
<dbReference type="Gramene" id="BGIOSGA021655-TA">
    <property type="protein sequence ID" value="BGIOSGA021655-PA"/>
    <property type="gene ID" value="BGIOSGA021655"/>
</dbReference>
<dbReference type="HOGENOM" id="CLU_000995_7_2_1"/>
<dbReference type="OMA" id="HYVKQHF"/>
<dbReference type="Proteomes" id="UP000007015">
    <property type="component" value="Chromosome 6"/>
</dbReference>
<dbReference type="GO" id="GO:0042555">
    <property type="term" value="C:MCM complex"/>
    <property type="evidence" value="ECO:0007669"/>
    <property type="project" value="TreeGrafter"/>
</dbReference>
<dbReference type="GO" id="GO:0005634">
    <property type="term" value="C:nucleus"/>
    <property type="evidence" value="ECO:0007669"/>
    <property type="project" value="UniProtKB-SubCell"/>
</dbReference>
<dbReference type="GO" id="GO:0005524">
    <property type="term" value="F:ATP binding"/>
    <property type="evidence" value="ECO:0007669"/>
    <property type="project" value="UniProtKB-KW"/>
</dbReference>
<dbReference type="GO" id="GO:0016887">
    <property type="term" value="F:ATP hydrolysis activity"/>
    <property type="evidence" value="ECO:0007669"/>
    <property type="project" value="InterPro"/>
</dbReference>
<dbReference type="GO" id="GO:0003697">
    <property type="term" value="F:single-stranded DNA binding"/>
    <property type="evidence" value="ECO:0007669"/>
    <property type="project" value="TreeGrafter"/>
</dbReference>
<dbReference type="GO" id="GO:0017116">
    <property type="term" value="F:single-stranded DNA helicase activity"/>
    <property type="evidence" value="ECO:0007669"/>
    <property type="project" value="TreeGrafter"/>
</dbReference>
<dbReference type="GO" id="GO:0008270">
    <property type="term" value="F:zinc ion binding"/>
    <property type="evidence" value="ECO:0007669"/>
    <property type="project" value="UniProtKB-KW"/>
</dbReference>
<dbReference type="GO" id="GO:0000724">
    <property type="term" value="P:double-strand break repair via homologous recombination"/>
    <property type="evidence" value="ECO:0007669"/>
    <property type="project" value="TreeGrafter"/>
</dbReference>
<dbReference type="GO" id="GO:0051321">
    <property type="term" value="P:meiotic cell cycle"/>
    <property type="evidence" value="ECO:0007669"/>
    <property type="project" value="UniProtKB-KW"/>
</dbReference>
<dbReference type="CDD" id="cd17760">
    <property type="entry name" value="MCM9"/>
    <property type="match status" value="1"/>
</dbReference>
<dbReference type="FunFam" id="3.30.1640.10:FF:000051">
    <property type="entry name" value="DNA helicase"/>
    <property type="match status" value="1"/>
</dbReference>
<dbReference type="FunFam" id="3.40.50.300:FF:002270">
    <property type="entry name" value="Probable DNA helicase MCM9"/>
    <property type="match status" value="1"/>
</dbReference>
<dbReference type="Gene3D" id="2.20.28.10">
    <property type="match status" value="1"/>
</dbReference>
<dbReference type="Gene3D" id="3.30.1640.10">
    <property type="entry name" value="mini-chromosome maintenance (MCM) complex, chain A, domain 1"/>
    <property type="match status" value="1"/>
</dbReference>
<dbReference type="Gene3D" id="2.40.50.140">
    <property type="entry name" value="Nucleic acid-binding proteins"/>
    <property type="match status" value="1"/>
</dbReference>
<dbReference type="Gene3D" id="3.40.50.300">
    <property type="entry name" value="P-loop containing nucleotide triphosphate hydrolases"/>
    <property type="match status" value="1"/>
</dbReference>
<dbReference type="InterPro" id="IPR003593">
    <property type="entry name" value="AAA+_ATPase"/>
</dbReference>
<dbReference type="InterPro" id="IPR031327">
    <property type="entry name" value="MCM"/>
</dbReference>
<dbReference type="InterPro" id="IPR001208">
    <property type="entry name" value="MCM_dom"/>
</dbReference>
<dbReference type="InterPro" id="IPR041562">
    <property type="entry name" value="MCM_lid"/>
</dbReference>
<dbReference type="InterPro" id="IPR027925">
    <property type="entry name" value="MCM_N"/>
</dbReference>
<dbReference type="InterPro" id="IPR033762">
    <property type="entry name" value="MCM_OB"/>
</dbReference>
<dbReference type="InterPro" id="IPR012340">
    <property type="entry name" value="NA-bd_OB-fold"/>
</dbReference>
<dbReference type="InterPro" id="IPR027417">
    <property type="entry name" value="P-loop_NTPase"/>
</dbReference>
<dbReference type="PANTHER" id="PTHR11630:SF48">
    <property type="entry name" value="DNA HELICASE MCM9"/>
    <property type="match status" value="1"/>
</dbReference>
<dbReference type="PANTHER" id="PTHR11630">
    <property type="entry name" value="DNA REPLICATION LICENSING FACTOR MCM FAMILY MEMBER"/>
    <property type="match status" value="1"/>
</dbReference>
<dbReference type="Pfam" id="PF00493">
    <property type="entry name" value="MCM"/>
    <property type="match status" value="1"/>
</dbReference>
<dbReference type="Pfam" id="PF17855">
    <property type="entry name" value="MCM_lid"/>
    <property type="match status" value="1"/>
</dbReference>
<dbReference type="Pfam" id="PF14551">
    <property type="entry name" value="MCM_N"/>
    <property type="match status" value="1"/>
</dbReference>
<dbReference type="Pfam" id="PF17207">
    <property type="entry name" value="MCM_OB"/>
    <property type="match status" value="1"/>
</dbReference>
<dbReference type="PRINTS" id="PR01657">
    <property type="entry name" value="MCMFAMILY"/>
</dbReference>
<dbReference type="SMART" id="SM00382">
    <property type="entry name" value="AAA"/>
    <property type="match status" value="1"/>
</dbReference>
<dbReference type="SMART" id="SM00350">
    <property type="entry name" value="MCM"/>
    <property type="match status" value="1"/>
</dbReference>
<dbReference type="SUPFAM" id="SSF50249">
    <property type="entry name" value="Nucleic acid-binding proteins"/>
    <property type="match status" value="1"/>
</dbReference>
<dbReference type="SUPFAM" id="SSF52540">
    <property type="entry name" value="P-loop containing nucleoside triphosphate hydrolases"/>
    <property type="match status" value="1"/>
</dbReference>
<dbReference type="PROSITE" id="PS50051">
    <property type="entry name" value="MCM_2"/>
    <property type="match status" value="1"/>
</dbReference>
<comment type="function">
    <text evidence="1">Probable DNA helicase that may play a role in DNA repair during meiosis.</text>
</comment>
<comment type="catalytic activity">
    <reaction>
        <text>ATP + H2O = ADP + phosphate + H(+)</text>
        <dbReference type="Rhea" id="RHEA:13065"/>
        <dbReference type="ChEBI" id="CHEBI:15377"/>
        <dbReference type="ChEBI" id="CHEBI:15378"/>
        <dbReference type="ChEBI" id="CHEBI:30616"/>
        <dbReference type="ChEBI" id="CHEBI:43474"/>
        <dbReference type="ChEBI" id="CHEBI:456216"/>
        <dbReference type="EC" id="3.6.4.12"/>
    </reaction>
</comment>
<comment type="subcellular location">
    <subcellularLocation>
        <location evidence="3">Nucleus</location>
    </subcellularLocation>
</comment>
<comment type="similarity">
    <text evidence="3">Belongs to the MCM family.</text>
</comment>
<proteinExistence type="inferred from homology"/>
<name>MCM9_ORYSI</name>
<protein>
    <recommendedName>
        <fullName>Probable DNA helicase MCM9</fullName>
        <ecNumber>3.6.4.12</ecNumber>
    </recommendedName>
    <alternativeName>
        <fullName>Minichromosome maintenance 9</fullName>
    </alternativeName>
</protein>
<keyword id="KW-0067">ATP-binding</keyword>
<keyword id="KW-0227">DNA damage</keyword>
<keyword id="KW-0234">DNA repair</keyword>
<keyword id="KW-0238">DNA-binding</keyword>
<keyword id="KW-0347">Helicase</keyword>
<keyword id="KW-0378">Hydrolase</keyword>
<keyword id="KW-0469">Meiosis</keyword>
<keyword id="KW-0479">Metal-binding</keyword>
<keyword id="KW-0547">Nucleotide-binding</keyword>
<keyword id="KW-0539">Nucleus</keyword>
<keyword id="KW-1185">Reference proteome</keyword>
<keyword id="KW-0862">Zinc</keyword>
<keyword id="KW-0863">Zinc-finger</keyword>
<accession>B8B406</accession>